<accession>P75523</accession>
<gene>
    <name evidence="1" type="primary">rsgA</name>
    <name type="synonym">engC</name>
    <name type="ordered locus">MPN_249</name>
    <name type="ORF">MP583</name>
</gene>
<organism>
    <name type="scientific">Mycoplasma pneumoniae (strain ATCC 29342 / M129 / Subtype 1)</name>
    <name type="common">Mycoplasmoides pneumoniae</name>
    <dbReference type="NCBI Taxonomy" id="272634"/>
    <lineage>
        <taxon>Bacteria</taxon>
        <taxon>Bacillati</taxon>
        <taxon>Mycoplasmatota</taxon>
        <taxon>Mycoplasmoidales</taxon>
        <taxon>Mycoplasmoidaceae</taxon>
        <taxon>Mycoplasmoides</taxon>
    </lineage>
</organism>
<feature type="chain" id="PRO_0000171496" description="Small ribosomal subunit biogenesis GTPase RsgA">
    <location>
        <begin position="1"/>
        <end position="278"/>
    </location>
</feature>
<feature type="domain" description="CP-type G" evidence="2">
    <location>
        <begin position="62"/>
        <end position="218"/>
    </location>
</feature>
<feature type="binding site" evidence="1">
    <location>
        <begin position="112"/>
        <end position="115"/>
    </location>
    <ligand>
        <name>GTP</name>
        <dbReference type="ChEBI" id="CHEBI:37565"/>
    </ligand>
</feature>
<feature type="binding site" evidence="1">
    <location>
        <begin position="162"/>
        <end position="170"/>
    </location>
    <ligand>
        <name>GTP</name>
        <dbReference type="ChEBI" id="CHEBI:37565"/>
    </ligand>
</feature>
<feature type="binding site" evidence="1">
    <location>
        <position position="241"/>
    </location>
    <ligand>
        <name>Zn(2+)</name>
        <dbReference type="ChEBI" id="CHEBI:29105"/>
    </ligand>
</feature>
<feature type="binding site" evidence="1">
    <location>
        <position position="246"/>
    </location>
    <ligand>
        <name>Zn(2+)</name>
        <dbReference type="ChEBI" id="CHEBI:29105"/>
    </ligand>
</feature>
<feature type="binding site" evidence="1">
    <location>
        <position position="248"/>
    </location>
    <ligand>
        <name>Zn(2+)</name>
        <dbReference type="ChEBI" id="CHEBI:29105"/>
    </ligand>
</feature>
<feature type="binding site" evidence="1">
    <location>
        <position position="254"/>
    </location>
    <ligand>
        <name>Zn(2+)</name>
        <dbReference type="ChEBI" id="CHEBI:29105"/>
    </ligand>
</feature>
<reference key="1">
    <citation type="journal article" date="1996" name="Nucleic Acids Res.">
        <title>Complete sequence analysis of the genome of the bacterium Mycoplasma pneumoniae.</title>
        <authorList>
            <person name="Himmelreich R."/>
            <person name="Hilbert H."/>
            <person name="Plagens H."/>
            <person name="Pirkl E."/>
            <person name="Li B.-C."/>
            <person name="Herrmann R."/>
        </authorList>
    </citation>
    <scope>NUCLEOTIDE SEQUENCE [LARGE SCALE GENOMIC DNA]</scope>
    <source>
        <strain>ATCC 29342 / M129 / Subtype 1</strain>
    </source>
</reference>
<keyword id="KW-0963">Cytoplasm</keyword>
<keyword id="KW-0342">GTP-binding</keyword>
<keyword id="KW-0378">Hydrolase</keyword>
<keyword id="KW-0479">Metal-binding</keyword>
<keyword id="KW-0547">Nucleotide-binding</keyword>
<keyword id="KW-1185">Reference proteome</keyword>
<keyword id="KW-0690">Ribosome biogenesis</keyword>
<keyword id="KW-0694">RNA-binding</keyword>
<keyword id="KW-0699">rRNA-binding</keyword>
<keyword id="KW-0862">Zinc</keyword>
<comment type="function">
    <text evidence="1">One of several proteins that assist in the late maturation steps of the functional core of the 30S ribosomal subunit. Helps release RbfA from mature subunits. May play a role in the assembly of ribosomal proteins into the subunit. Circularly permuted GTPase that catalyzes slow GTP hydrolysis, GTPase activity is stimulated by the 30S ribosomal subunit.</text>
</comment>
<comment type="cofactor">
    <cofactor evidence="1">
        <name>Zn(2+)</name>
        <dbReference type="ChEBI" id="CHEBI:29105"/>
    </cofactor>
    <text evidence="1">Binds 1 zinc ion per subunit.</text>
</comment>
<comment type="subunit">
    <text evidence="1">Monomer. Associates with 30S ribosomal subunit, binds 16S rRNA.</text>
</comment>
<comment type="subcellular location">
    <subcellularLocation>
        <location evidence="1">Cytoplasm</location>
    </subcellularLocation>
</comment>
<comment type="similarity">
    <text evidence="1">Belongs to the TRAFAC class YlqF/YawG GTPase family. RsgA subfamily.</text>
</comment>
<proteinExistence type="inferred from homology"/>
<dbReference type="EC" id="3.6.1.-" evidence="1"/>
<dbReference type="EMBL" id="U00089">
    <property type="protein sequence ID" value="AAB96231.1"/>
    <property type="molecule type" value="Genomic_DNA"/>
</dbReference>
<dbReference type="PIR" id="S73909">
    <property type="entry name" value="S73909"/>
</dbReference>
<dbReference type="RefSeq" id="NP_109937.1">
    <property type="nucleotide sequence ID" value="NC_000912.1"/>
</dbReference>
<dbReference type="RefSeq" id="WP_010874606.1">
    <property type="nucleotide sequence ID" value="NZ_OU342337.1"/>
</dbReference>
<dbReference type="SMR" id="P75523"/>
<dbReference type="STRING" id="272634.MPN_249"/>
<dbReference type="EnsemblBacteria" id="AAB96231">
    <property type="protein sequence ID" value="AAB96231"/>
    <property type="gene ID" value="MPN_249"/>
</dbReference>
<dbReference type="GeneID" id="66609105"/>
<dbReference type="KEGG" id="mpn:MPN_249"/>
<dbReference type="PATRIC" id="fig|272634.6.peg.268"/>
<dbReference type="HOGENOM" id="CLU_033617_2_1_14"/>
<dbReference type="OrthoDB" id="9809485at2"/>
<dbReference type="BioCyc" id="MPNE272634:G1GJ3-393-MONOMER"/>
<dbReference type="Proteomes" id="UP000000808">
    <property type="component" value="Chromosome"/>
</dbReference>
<dbReference type="GO" id="GO:0005737">
    <property type="term" value="C:cytoplasm"/>
    <property type="evidence" value="ECO:0007669"/>
    <property type="project" value="UniProtKB-SubCell"/>
</dbReference>
<dbReference type="GO" id="GO:0005525">
    <property type="term" value="F:GTP binding"/>
    <property type="evidence" value="ECO:0007669"/>
    <property type="project" value="UniProtKB-UniRule"/>
</dbReference>
<dbReference type="GO" id="GO:0003924">
    <property type="term" value="F:GTPase activity"/>
    <property type="evidence" value="ECO:0007669"/>
    <property type="project" value="UniProtKB-UniRule"/>
</dbReference>
<dbReference type="GO" id="GO:0046872">
    <property type="term" value="F:metal ion binding"/>
    <property type="evidence" value="ECO:0007669"/>
    <property type="project" value="UniProtKB-KW"/>
</dbReference>
<dbReference type="GO" id="GO:0019843">
    <property type="term" value="F:rRNA binding"/>
    <property type="evidence" value="ECO:0007669"/>
    <property type="project" value="UniProtKB-KW"/>
</dbReference>
<dbReference type="GO" id="GO:0042274">
    <property type="term" value="P:ribosomal small subunit biogenesis"/>
    <property type="evidence" value="ECO:0007669"/>
    <property type="project" value="UniProtKB-UniRule"/>
</dbReference>
<dbReference type="CDD" id="cd01854">
    <property type="entry name" value="YjeQ_EngC"/>
    <property type="match status" value="1"/>
</dbReference>
<dbReference type="Gene3D" id="3.40.50.300">
    <property type="entry name" value="P-loop containing nucleotide triphosphate hydrolases"/>
    <property type="match status" value="1"/>
</dbReference>
<dbReference type="Gene3D" id="1.10.40.50">
    <property type="entry name" value="Probable gtpase engc, domain 3"/>
    <property type="match status" value="1"/>
</dbReference>
<dbReference type="HAMAP" id="MF_01820">
    <property type="entry name" value="GTPase_RsgA"/>
    <property type="match status" value="1"/>
</dbReference>
<dbReference type="InterPro" id="IPR030378">
    <property type="entry name" value="G_CP_dom"/>
</dbReference>
<dbReference type="InterPro" id="IPR027417">
    <property type="entry name" value="P-loop_NTPase"/>
</dbReference>
<dbReference type="InterPro" id="IPR004881">
    <property type="entry name" value="Ribosome_biogen_GTPase_RsgA"/>
</dbReference>
<dbReference type="InterPro" id="IPR010914">
    <property type="entry name" value="RsgA_GTPase_dom"/>
</dbReference>
<dbReference type="NCBIfam" id="TIGR00157">
    <property type="entry name" value="ribosome small subunit-dependent GTPase A"/>
    <property type="match status" value="1"/>
</dbReference>
<dbReference type="PANTHER" id="PTHR32120">
    <property type="entry name" value="SMALL RIBOSOMAL SUBUNIT BIOGENESIS GTPASE RSGA"/>
    <property type="match status" value="1"/>
</dbReference>
<dbReference type="PANTHER" id="PTHR32120:SF11">
    <property type="entry name" value="SMALL RIBOSOMAL SUBUNIT BIOGENESIS GTPASE RSGA 1, MITOCHONDRIAL-RELATED"/>
    <property type="match status" value="1"/>
</dbReference>
<dbReference type="Pfam" id="PF03193">
    <property type="entry name" value="RsgA_GTPase"/>
    <property type="match status" value="1"/>
</dbReference>
<dbReference type="SUPFAM" id="SSF52540">
    <property type="entry name" value="P-loop containing nucleoside triphosphate hydrolases"/>
    <property type="match status" value="1"/>
</dbReference>
<dbReference type="PROSITE" id="PS50936">
    <property type="entry name" value="ENGC_GTPASE"/>
    <property type="match status" value="1"/>
</dbReference>
<dbReference type="PROSITE" id="PS51721">
    <property type="entry name" value="G_CP"/>
    <property type="match status" value="1"/>
</dbReference>
<sequence>MSIRKTGIVFQRFGKQFKVFVENQTLVAFAQKKLQWKRDFKLLVGDKVTLENGVIVAVEERKNTLVRPKVVNVDQVVIVQSLIEPKINWQQLFKLLIHFHAQNVARLVLVITKNDLEFEPAEKARLSELTSFGYQLFFTAPNADLPLTLFTELQNRFSVFMGQSGVGKSSLINRLDSQIHQAIQALSAHQFGKNTTTSTVMFPFQNGFICDTPGFNVIDFPNLKQLAAQHFVGFASLIGQCHFSNCTHQSEKGCFIVSAVTQKSYSLWLYESYLKLIN</sequence>
<evidence type="ECO:0000255" key="1">
    <source>
        <dbReference type="HAMAP-Rule" id="MF_01820"/>
    </source>
</evidence>
<evidence type="ECO:0000255" key="2">
    <source>
        <dbReference type="PROSITE-ProRule" id="PRU01058"/>
    </source>
</evidence>
<protein>
    <recommendedName>
        <fullName evidence="1">Small ribosomal subunit biogenesis GTPase RsgA</fullName>
        <ecNumber evidence="1">3.6.1.-</ecNumber>
    </recommendedName>
</protein>
<name>RSGA_MYCPN</name>